<comment type="function">
    <text evidence="2">Cell wall formation.</text>
</comment>
<comment type="catalytic activity">
    <reaction evidence="2">
        <text>2 D-alanine + ATP = D-alanyl-D-alanine + ADP + phosphate + H(+)</text>
        <dbReference type="Rhea" id="RHEA:11224"/>
        <dbReference type="ChEBI" id="CHEBI:15378"/>
        <dbReference type="ChEBI" id="CHEBI:30616"/>
        <dbReference type="ChEBI" id="CHEBI:43474"/>
        <dbReference type="ChEBI" id="CHEBI:57416"/>
        <dbReference type="ChEBI" id="CHEBI:57822"/>
        <dbReference type="ChEBI" id="CHEBI:456216"/>
        <dbReference type="EC" id="6.3.2.4"/>
    </reaction>
</comment>
<comment type="cofactor">
    <cofactor evidence="1">
        <name>Mg(2+)</name>
        <dbReference type="ChEBI" id="CHEBI:18420"/>
    </cofactor>
    <cofactor evidence="1">
        <name>Mn(2+)</name>
        <dbReference type="ChEBI" id="CHEBI:29035"/>
    </cofactor>
    <text evidence="1">Binds 2 magnesium or manganese ions per subunit.</text>
</comment>
<comment type="pathway">
    <text evidence="2">Cell wall biogenesis; peptidoglycan biosynthesis.</text>
</comment>
<comment type="subcellular location">
    <subcellularLocation>
        <location evidence="2">Cytoplasm</location>
    </subcellularLocation>
</comment>
<comment type="similarity">
    <text evidence="2">Belongs to the D-alanine--D-alanine ligase family.</text>
</comment>
<keyword id="KW-0067">ATP-binding</keyword>
<keyword id="KW-0133">Cell shape</keyword>
<keyword id="KW-0961">Cell wall biogenesis/degradation</keyword>
<keyword id="KW-0963">Cytoplasm</keyword>
<keyword id="KW-0436">Ligase</keyword>
<keyword id="KW-0460">Magnesium</keyword>
<keyword id="KW-0464">Manganese</keyword>
<keyword id="KW-0479">Metal-binding</keyword>
<keyword id="KW-0547">Nucleotide-binding</keyword>
<keyword id="KW-0573">Peptidoglycan synthesis</keyword>
<dbReference type="EC" id="6.3.2.4" evidence="2"/>
<dbReference type="EMBL" id="CP000720">
    <property type="protein sequence ID" value="ABS48564.1"/>
    <property type="molecule type" value="Genomic_DNA"/>
</dbReference>
<dbReference type="RefSeq" id="WP_002210432.1">
    <property type="nucleotide sequence ID" value="NC_009708.1"/>
</dbReference>
<dbReference type="SMR" id="A7FM64"/>
<dbReference type="KEGG" id="ypi:YpsIP31758_3385"/>
<dbReference type="HOGENOM" id="CLU_039268_1_2_6"/>
<dbReference type="UniPathway" id="UPA00219"/>
<dbReference type="Proteomes" id="UP000002412">
    <property type="component" value="Chromosome"/>
</dbReference>
<dbReference type="GO" id="GO:0005829">
    <property type="term" value="C:cytosol"/>
    <property type="evidence" value="ECO:0007669"/>
    <property type="project" value="TreeGrafter"/>
</dbReference>
<dbReference type="GO" id="GO:0005524">
    <property type="term" value="F:ATP binding"/>
    <property type="evidence" value="ECO:0007669"/>
    <property type="project" value="UniProtKB-KW"/>
</dbReference>
<dbReference type="GO" id="GO:0008716">
    <property type="term" value="F:D-alanine-D-alanine ligase activity"/>
    <property type="evidence" value="ECO:0007669"/>
    <property type="project" value="UniProtKB-UniRule"/>
</dbReference>
<dbReference type="GO" id="GO:0046872">
    <property type="term" value="F:metal ion binding"/>
    <property type="evidence" value="ECO:0007669"/>
    <property type="project" value="UniProtKB-KW"/>
</dbReference>
<dbReference type="GO" id="GO:0071555">
    <property type="term" value="P:cell wall organization"/>
    <property type="evidence" value="ECO:0007669"/>
    <property type="project" value="UniProtKB-KW"/>
</dbReference>
<dbReference type="GO" id="GO:0009252">
    <property type="term" value="P:peptidoglycan biosynthetic process"/>
    <property type="evidence" value="ECO:0007669"/>
    <property type="project" value="UniProtKB-UniRule"/>
</dbReference>
<dbReference type="GO" id="GO:0008360">
    <property type="term" value="P:regulation of cell shape"/>
    <property type="evidence" value="ECO:0007669"/>
    <property type="project" value="UniProtKB-KW"/>
</dbReference>
<dbReference type="FunFam" id="3.30.1490.20:FF:000007">
    <property type="entry name" value="D-alanine--D-alanine ligase"/>
    <property type="match status" value="1"/>
</dbReference>
<dbReference type="FunFam" id="3.30.470.20:FF:000008">
    <property type="entry name" value="D-alanine--D-alanine ligase"/>
    <property type="match status" value="1"/>
</dbReference>
<dbReference type="FunFam" id="3.40.50.20:FF:000013">
    <property type="entry name" value="D-alanine--D-alanine ligase"/>
    <property type="match status" value="1"/>
</dbReference>
<dbReference type="Gene3D" id="3.40.50.20">
    <property type="match status" value="1"/>
</dbReference>
<dbReference type="Gene3D" id="3.30.1490.20">
    <property type="entry name" value="ATP-grasp fold, A domain"/>
    <property type="match status" value="1"/>
</dbReference>
<dbReference type="Gene3D" id="3.30.470.20">
    <property type="entry name" value="ATP-grasp fold, B domain"/>
    <property type="match status" value="1"/>
</dbReference>
<dbReference type="HAMAP" id="MF_00047">
    <property type="entry name" value="Dala_Dala_lig"/>
    <property type="match status" value="1"/>
</dbReference>
<dbReference type="InterPro" id="IPR011761">
    <property type="entry name" value="ATP-grasp"/>
</dbReference>
<dbReference type="InterPro" id="IPR013815">
    <property type="entry name" value="ATP_grasp_subdomain_1"/>
</dbReference>
<dbReference type="InterPro" id="IPR000291">
    <property type="entry name" value="D-Ala_lig_Van_CS"/>
</dbReference>
<dbReference type="InterPro" id="IPR005905">
    <property type="entry name" value="D_ala_D_ala"/>
</dbReference>
<dbReference type="InterPro" id="IPR011095">
    <property type="entry name" value="Dala_Dala_lig_C"/>
</dbReference>
<dbReference type="InterPro" id="IPR011127">
    <property type="entry name" value="Dala_Dala_lig_N"/>
</dbReference>
<dbReference type="InterPro" id="IPR016185">
    <property type="entry name" value="PreATP-grasp_dom_sf"/>
</dbReference>
<dbReference type="NCBIfam" id="TIGR01205">
    <property type="entry name" value="D_ala_D_alaTIGR"/>
    <property type="match status" value="1"/>
</dbReference>
<dbReference type="NCBIfam" id="NF002378">
    <property type="entry name" value="PRK01372.1"/>
    <property type="match status" value="1"/>
</dbReference>
<dbReference type="PANTHER" id="PTHR23132">
    <property type="entry name" value="D-ALANINE--D-ALANINE LIGASE"/>
    <property type="match status" value="1"/>
</dbReference>
<dbReference type="PANTHER" id="PTHR23132:SF23">
    <property type="entry name" value="D-ALANINE--D-ALANINE LIGASE B"/>
    <property type="match status" value="1"/>
</dbReference>
<dbReference type="Pfam" id="PF07478">
    <property type="entry name" value="Dala_Dala_lig_C"/>
    <property type="match status" value="1"/>
</dbReference>
<dbReference type="Pfam" id="PF01820">
    <property type="entry name" value="Dala_Dala_lig_N"/>
    <property type="match status" value="1"/>
</dbReference>
<dbReference type="PIRSF" id="PIRSF039102">
    <property type="entry name" value="Ddl/VanB"/>
    <property type="match status" value="1"/>
</dbReference>
<dbReference type="SUPFAM" id="SSF56059">
    <property type="entry name" value="Glutathione synthetase ATP-binding domain-like"/>
    <property type="match status" value="1"/>
</dbReference>
<dbReference type="SUPFAM" id="SSF52440">
    <property type="entry name" value="PreATP-grasp domain"/>
    <property type="match status" value="1"/>
</dbReference>
<dbReference type="PROSITE" id="PS50975">
    <property type="entry name" value="ATP_GRASP"/>
    <property type="match status" value="1"/>
</dbReference>
<dbReference type="PROSITE" id="PS00843">
    <property type="entry name" value="DALA_DALA_LIGASE_1"/>
    <property type="match status" value="1"/>
</dbReference>
<dbReference type="PROSITE" id="PS00844">
    <property type="entry name" value="DALA_DALA_LIGASE_2"/>
    <property type="match status" value="1"/>
</dbReference>
<accession>A7FM64</accession>
<gene>
    <name evidence="2" type="primary">ddl</name>
    <name type="ordered locus">YpsIP31758_3385</name>
</gene>
<feature type="chain" id="PRO_1000057332" description="D-alanine--D-alanine ligase">
    <location>
        <begin position="1"/>
        <end position="306"/>
    </location>
</feature>
<feature type="domain" description="ATP-grasp" evidence="2">
    <location>
        <begin position="101"/>
        <end position="303"/>
    </location>
</feature>
<feature type="binding site" evidence="2">
    <location>
        <begin position="134"/>
        <end position="189"/>
    </location>
    <ligand>
        <name>ATP</name>
        <dbReference type="ChEBI" id="CHEBI:30616"/>
    </ligand>
</feature>
<feature type="binding site" evidence="2">
    <location>
        <position position="257"/>
    </location>
    <ligand>
        <name>Mg(2+)</name>
        <dbReference type="ChEBI" id="CHEBI:18420"/>
        <label>1</label>
    </ligand>
</feature>
<feature type="binding site" evidence="2">
    <location>
        <position position="270"/>
    </location>
    <ligand>
        <name>Mg(2+)</name>
        <dbReference type="ChEBI" id="CHEBI:18420"/>
        <label>1</label>
    </ligand>
</feature>
<feature type="binding site" evidence="2">
    <location>
        <position position="270"/>
    </location>
    <ligand>
        <name>Mg(2+)</name>
        <dbReference type="ChEBI" id="CHEBI:18420"/>
        <label>2</label>
    </ligand>
</feature>
<feature type="binding site" evidence="2">
    <location>
        <position position="272"/>
    </location>
    <ligand>
        <name>Mg(2+)</name>
        <dbReference type="ChEBI" id="CHEBI:18420"/>
        <label>2</label>
    </ligand>
</feature>
<sequence>MAEKVAVLLGGTSAEREVSLLSGQAVLAGLKEAGIDAYGVDTKDFPVTQLKEQGFDKVFIALHGRGGEDGTLQGVLEFLQLPYTGSGVMASALTMDKLRTKLVWQALGLPISPYVALNRQQFETLSPEELVACVAKLGLPLIVKPSHEGSSVGMSKVDHASELQKALVEAFQHDSDVLIEKWLSGPEFTVAILGDEVLPSIRIQPPGVFYDYDAKYLSDKTQYFCPSGLSDESEQQLAALALQAYHALDCSGWGRVDVMQDRDGHFYLLEVNTSPGMTSHSLVPMAARQYGLSFSQLVARILMLAD</sequence>
<protein>
    <recommendedName>
        <fullName evidence="2">D-alanine--D-alanine ligase</fullName>
        <ecNumber evidence="2">6.3.2.4</ecNumber>
    </recommendedName>
    <alternativeName>
        <fullName evidence="2">D-Ala-D-Ala ligase</fullName>
    </alternativeName>
    <alternativeName>
        <fullName evidence="2">D-alanylalanine synthetase</fullName>
    </alternativeName>
</protein>
<evidence type="ECO:0000250" key="1"/>
<evidence type="ECO:0000255" key="2">
    <source>
        <dbReference type="HAMAP-Rule" id="MF_00047"/>
    </source>
</evidence>
<name>DDL_YERP3</name>
<organism>
    <name type="scientific">Yersinia pseudotuberculosis serotype O:1b (strain IP 31758)</name>
    <dbReference type="NCBI Taxonomy" id="349747"/>
    <lineage>
        <taxon>Bacteria</taxon>
        <taxon>Pseudomonadati</taxon>
        <taxon>Pseudomonadota</taxon>
        <taxon>Gammaproteobacteria</taxon>
        <taxon>Enterobacterales</taxon>
        <taxon>Yersiniaceae</taxon>
        <taxon>Yersinia</taxon>
    </lineage>
</organism>
<proteinExistence type="inferred from homology"/>
<reference key="1">
    <citation type="journal article" date="2007" name="PLoS Genet.">
        <title>The complete genome sequence of Yersinia pseudotuberculosis IP31758, the causative agent of Far East scarlet-like fever.</title>
        <authorList>
            <person name="Eppinger M."/>
            <person name="Rosovitz M.J."/>
            <person name="Fricke W.F."/>
            <person name="Rasko D.A."/>
            <person name="Kokorina G."/>
            <person name="Fayolle C."/>
            <person name="Lindler L.E."/>
            <person name="Carniel E."/>
            <person name="Ravel J."/>
        </authorList>
    </citation>
    <scope>NUCLEOTIDE SEQUENCE [LARGE SCALE GENOMIC DNA]</scope>
    <source>
        <strain>IP 31758</strain>
    </source>
</reference>